<protein>
    <recommendedName>
        <fullName evidence="3">C-glycoside deglycosidase alpha subunit</fullName>
        <shortName evidence="3">CGD alpha subunit</shortName>
        <ecNumber evidence="2">4.1.99.-</ecNumber>
    </recommendedName>
    <alternativeName>
        <fullName evidence="3">AgCGD1 alpha</fullName>
    </alternativeName>
    <alternativeName>
        <fullName evidence="3">C-deglycosylation enzyme alpha subunit</fullName>
    </alternativeName>
</protein>
<proteinExistence type="evidence at protein level"/>
<reference key="1">
    <citation type="submission" date="2011-12" db="EMBL/GenBank/DDBJ databases">
        <title>Whole genome shotgun sequence of Arthrobacter globiformis NBRC 12137.</title>
        <authorList>
            <person name="Miyazawa S."/>
            <person name="Hosoyama A."/>
            <person name="Tsuchikane K."/>
            <person name="Katsumata H."/>
            <person name="Yamazaki S."/>
            <person name="Fujita N."/>
        </authorList>
    </citation>
    <scope>NUCLEOTIDE SEQUENCE [LARGE SCALE GENOMIC DNA]</scope>
    <source>
        <strain>ATCC 8010 / DSM 20124 / JCM 1332 / NBRC 12137 / NCIMB 8907 / NRRL B-2979 / 168</strain>
    </source>
</reference>
<reference key="2">
    <citation type="journal article" date="2021" name="Nat. Commun.">
        <title>C-Glycoside metabolism in the gut and in nature: Identification, characterization, structural analyses and distribution of C-C bond-cleaving enzymes.</title>
        <authorList>
            <person name="Mori T."/>
            <person name="Kumano T."/>
            <person name="He H."/>
            <person name="Watanabe S."/>
            <person name="Senda M."/>
            <person name="Moriya T."/>
            <person name="Adachi N."/>
            <person name="Hori S."/>
            <person name="Terashita Y."/>
            <person name="Kawasaki M."/>
            <person name="Hashimoto Y."/>
            <person name="Awakawa T."/>
            <person name="Senda T."/>
            <person name="Abe I."/>
            <person name="Kobayashi M."/>
        </authorList>
    </citation>
    <scope>FUNCTION</scope>
    <scope>CATALYTIC ACTIVITY</scope>
    <scope>COFACTOR</scope>
    <scope>ACTIVITY REGULATION</scope>
    <scope>BIOPHYSICOCHEMICAL PROPERTIES</scope>
    <scope>SUBUNIT</scope>
    <source>
        <strain>ATCC 8010 / DSM 20124 / JCM 1332 / NBRC 12137 / NCIMB 8907 / NRRL B-2979 / 168</strain>
    </source>
</reference>
<gene>
    <name evidence="3" type="primary">carB1</name>
    <name evidence="5" type="ORF">ARGLB_075_00540</name>
</gene>
<name>CGDA1_ARTG1</name>
<organism>
    <name type="scientific">Arthrobacter globiformis (strain ATCC 8010 / DSM 20124 / JCM 1332 / NBRC 12137 / NCIMB 8907 / NRRL B-2979 / 168)</name>
    <dbReference type="NCBI Taxonomy" id="1077972"/>
    <lineage>
        <taxon>Bacteria</taxon>
        <taxon>Bacillati</taxon>
        <taxon>Actinomycetota</taxon>
        <taxon>Actinomycetes</taxon>
        <taxon>Micrococcales</taxon>
        <taxon>Micrococcaceae</taxon>
        <taxon>Arthrobacter</taxon>
    </lineage>
</organism>
<dbReference type="EC" id="4.1.99.-" evidence="2"/>
<dbReference type="EMBL" id="BAEG01000075">
    <property type="protein sequence ID" value="GAB14771.1"/>
    <property type="molecule type" value="Genomic_DNA"/>
</dbReference>
<dbReference type="RefSeq" id="WP_003803559.1">
    <property type="nucleotide sequence ID" value="NZ_BAEG01000075.1"/>
</dbReference>
<dbReference type="SMR" id="H0QPM0"/>
<dbReference type="STRING" id="1077972.ARGLB_075_00540"/>
<dbReference type="eggNOG" id="COG1082">
    <property type="taxonomic scope" value="Bacteria"/>
</dbReference>
<dbReference type="OrthoDB" id="3520171at2"/>
<dbReference type="Proteomes" id="UP000003828">
    <property type="component" value="Unassembled WGS sequence"/>
</dbReference>
<dbReference type="GO" id="GO:0016829">
    <property type="term" value="F:lyase activity"/>
    <property type="evidence" value="ECO:0007669"/>
    <property type="project" value="UniProtKB-KW"/>
</dbReference>
<dbReference type="GO" id="GO:0046872">
    <property type="term" value="F:metal ion binding"/>
    <property type="evidence" value="ECO:0007669"/>
    <property type="project" value="UniProtKB-KW"/>
</dbReference>
<dbReference type="Gene3D" id="3.20.20.150">
    <property type="entry name" value="Divalent-metal-dependent TIM barrel enzymes"/>
    <property type="match status" value="1"/>
</dbReference>
<dbReference type="InterPro" id="IPR036237">
    <property type="entry name" value="Xyl_isomerase-like_sf"/>
</dbReference>
<dbReference type="SUPFAM" id="SSF51658">
    <property type="entry name" value="Xylose isomerase-like"/>
    <property type="match status" value="2"/>
</dbReference>
<feature type="chain" id="PRO_0000461023" description="C-glycoside deglycosidase alpha subunit">
    <location>
        <begin position="1"/>
        <end position="367"/>
    </location>
</feature>
<feature type="active site" description="Proton acceptor" evidence="1">
    <location>
        <position position="148"/>
    </location>
</feature>
<feature type="binding site" evidence="1">
    <location>
        <position position="146"/>
    </location>
    <ligand>
        <name>Mg(2+)</name>
        <dbReference type="ChEBI" id="CHEBI:18420"/>
    </ligand>
</feature>
<feature type="binding site" evidence="1">
    <location>
        <position position="178"/>
    </location>
    <ligand>
        <name>Mg(2+)</name>
        <dbReference type="ChEBI" id="CHEBI:18420"/>
    </ligand>
</feature>
<feature type="binding site" evidence="1">
    <location>
        <position position="276"/>
    </location>
    <ligand>
        <name>Mg(2+)</name>
        <dbReference type="ChEBI" id="CHEBI:18420"/>
    </ligand>
</feature>
<feature type="binding site" evidence="1">
    <location>
        <position position="312"/>
    </location>
    <ligand>
        <name>Mg(2+)</name>
        <dbReference type="ChEBI" id="CHEBI:18420"/>
    </ligand>
</feature>
<keyword id="KW-0119">Carbohydrate metabolism</keyword>
<keyword id="KW-0456">Lyase</keyword>
<keyword id="KW-0460">Magnesium</keyword>
<keyword id="KW-0479">Metal-binding</keyword>
<keyword id="KW-1185">Reference proteome</keyword>
<sequence>MTSLGTPIQGVTLYSFTRAFHARQYDLDGLIRKVAAEGFGPGLELIGFSSLRGFPDGIDDAFVGQFRDLVAEVDLIPTSLAVNVDTGIRRDRLMNHDELVEYMSKQIEVAARLGFPIARVQISLTPDAMESLLPVAEKYGVTLALEVHADQHGAHERVLALRDRYEKLDSPLLGFTADWGATVTGFAPSLLEAYRRRGAAEDLLRQVVELWNGFYAEGPPNTQKVHGERFGAFIGLAARSGRPDLGIDFAINGTGLFGPAPLDTWLEIMPWVRHVHGKFFGIDENGEEPSVPVRDLVRQLVENGYSGAISSEYEGWHWNNWQDPFDIIRGEQAVQRSAAANAGSAMITDASEARRILNSHLAQPVRG</sequence>
<comment type="function">
    <text evidence="2">Carbon-carbon bond-cleaving enzyme which participates in the metabolism of C-glycosides (PubMed:34728636). Acts on the C6-glycosylated compound 3''-dehydroisovitexin (3''-oxo-isovitexin) (PubMed:34728636). Shows weak activity with 3''-dehydroisoorientin (3''-oxo-homoorientin) and 3'-dehydromangiferin (3'-oxo-mangiferin) (PubMed:34728636).</text>
</comment>
<comment type="catalytic activity">
    <reaction evidence="2">
        <text>3''-dehydroisovitexin = 1,5-anhydro-D-erythro-hex-1-en-3-ulose + apigenin</text>
        <dbReference type="Rhea" id="RHEA:78775"/>
        <dbReference type="ChEBI" id="CHEBI:58470"/>
        <dbReference type="ChEBI" id="CHEBI:194219"/>
        <dbReference type="ChEBI" id="CHEBI:195275"/>
    </reaction>
</comment>
<comment type="cofactor">
    <cofactor evidence="2">
        <name>Mg(2+)</name>
        <dbReference type="ChEBI" id="CHEBI:18420"/>
    </cofactor>
</comment>
<comment type="activity regulation">
    <text evidence="2">Activity is strongly reduced in the presence of chelating agents.</text>
</comment>
<comment type="biophysicochemical properties">
    <kinetics>
        <KM evidence="2">3.5 mM for 3''-dehydroisovitexin</KM>
        <KM evidence="2">3.4 mM for 3''-dehydroisoorientin</KM>
        <KM evidence="2">3.7 mM for 3'-dehydromangiferin</KM>
        <text evidence="2">kcat is 4.6 min(-1) with 3''-dehydroisovitexin as substrate. kcat is 0.57 min(-1) with 3''-dehydroisoorientin as substrate. kcat is 0.17 min(-1) with 3'-dehydromangiferin as substrate.</text>
    </kinetics>
    <phDependence>
        <text evidence="2">Optimum pH is 7.5.</text>
    </phDependence>
    <temperatureDependence>
        <text evidence="2">Optimum temperature is around 40 degrees Celsius.</text>
    </temperatureDependence>
</comment>
<comment type="subunit">
    <text evidence="2">Heterodimer composed of an alpha subunit (CarB1) and a beta subunit (CarC1).</text>
</comment>
<comment type="similarity">
    <text evidence="4">Belongs to the C-glycoside deglycosidase alpha subunit family.</text>
</comment>
<evidence type="ECO:0000250" key="1">
    <source>
        <dbReference type="UniProtKB" id="H0QPL9"/>
    </source>
</evidence>
<evidence type="ECO:0000269" key="2">
    <source>
    </source>
</evidence>
<evidence type="ECO:0000303" key="3">
    <source>
    </source>
</evidence>
<evidence type="ECO:0000305" key="4"/>
<evidence type="ECO:0000312" key="5">
    <source>
        <dbReference type="EMBL" id="GAB14771.1"/>
    </source>
</evidence>
<accession>H0QPM0</accession>